<dbReference type="EMBL" id="AF074612">
    <property type="protein sequence ID" value="AAC69793.1"/>
    <property type="molecule type" value="Genomic_DNA"/>
</dbReference>
<dbReference type="EMBL" id="AF053946">
    <property type="protein sequence ID" value="AAC62566.1"/>
    <property type="molecule type" value="Genomic_DNA"/>
</dbReference>
<dbReference type="EMBL" id="AL117189">
    <property type="protein sequence ID" value="CAB54915.1"/>
    <property type="molecule type" value="Genomic_DNA"/>
</dbReference>
<dbReference type="EMBL" id="AE017043">
    <property type="protein sequence ID" value="AAS58564.1"/>
    <property type="molecule type" value="Genomic_DNA"/>
</dbReference>
<dbReference type="PIR" id="T43587">
    <property type="entry name" value="T43587"/>
</dbReference>
<dbReference type="RefSeq" id="NP_395172.1">
    <property type="nucleotide sequence ID" value="NC_003131.1"/>
</dbReference>
<dbReference type="RefSeq" id="NP_857744.1">
    <property type="nucleotide sequence ID" value="NC_004836.1"/>
</dbReference>
<dbReference type="RefSeq" id="NP_857939.1">
    <property type="nucleotide sequence ID" value="NC_004839.1"/>
</dbReference>
<dbReference type="RefSeq" id="WP_002212965.1">
    <property type="nucleotide sequence ID" value="NZ_WUCM01000070.1"/>
</dbReference>
<dbReference type="PDB" id="1XL3">
    <property type="method" value="X-ray"/>
    <property type="resolution" value="2.20 A"/>
    <property type="chains" value="C/D=1-92"/>
</dbReference>
<dbReference type="PDBsum" id="1XL3"/>
<dbReference type="SMR" id="P69968"/>
<dbReference type="IntAct" id="P69968">
    <property type="interactions" value="8"/>
</dbReference>
<dbReference type="MINT" id="P69968"/>
<dbReference type="PaxDb" id="214092-5832458"/>
<dbReference type="DNASU" id="1149303"/>
<dbReference type="EnsemblBacteria" id="AAS58564">
    <property type="protein sequence ID" value="AAS58564"/>
    <property type="gene ID" value="YP_pCD45"/>
</dbReference>
<dbReference type="GeneID" id="31412300"/>
<dbReference type="KEGG" id="ype:YPCD1.38c"/>
<dbReference type="KEGG" id="ypm:YP_pCD45"/>
<dbReference type="PATRIC" id="fig|214092.21.peg.49"/>
<dbReference type="eggNOG" id="ENOG50331IZ">
    <property type="taxonomic scope" value="Bacteria"/>
</dbReference>
<dbReference type="HOGENOM" id="CLU_2410908_0_0_6"/>
<dbReference type="OMA" id="NAMELTA"/>
<dbReference type="OrthoDB" id="6935130at2"/>
<dbReference type="EvolutionaryTrace" id="P69968"/>
<dbReference type="Proteomes" id="UP000000815">
    <property type="component" value="Plasmid pCD1"/>
</dbReference>
<dbReference type="Proteomes" id="UP000001019">
    <property type="component" value="Plasmid pCD1"/>
</dbReference>
<dbReference type="Gene3D" id="1.20.1280.80">
    <property type="match status" value="1"/>
</dbReference>
<dbReference type="InterPro" id="IPR015144">
    <property type="entry name" value="T3SS_TyeA"/>
</dbReference>
<dbReference type="InterPro" id="IPR013351">
    <property type="entry name" value="T3SS_TyeA-rel"/>
</dbReference>
<dbReference type="InterPro" id="IPR038347">
    <property type="entry name" value="TyeA_sf"/>
</dbReference>
<dbReference type="NCBIfam" id="TIGR02511">
    <property type="entry name" value="type_III_tyeA"/>
    <property type="match status" value="1"/>
</dbReference>
<dbReference type="Pfam" id="PF09059">
    <property type="entry name" value="TyeA"/>
    <property type="match status" value="1"/>
</dbReference>
<dbReference type="SUPFAM" id="SSF140591">
    <property type="entry name" value="Type III secretion system domain"/>
    <property type="match status" value="1"/>
</dbReference>
<organism>
    <name type="scientific">Yersinia pestis</name>
    <dbReference type="NCBI Taxonomy" id="632"/>
    <lineage>
        <taxon>Bacteria</taxon>
        <taxon>Pseudomonadati</taxon>
        <taxon>Pseudomonadota</taxon>
        <taxon>Gammaproteobacteria</taxon>
        <taxon>Enterobacterales</taxon>
        <taxon>Yersiniaceae</taxon>
        <taxon>Yersinia</taxon>
    </lineage>
</organism>
<proteinExistence type="evidence at protein level"/>
<comment type="function">
    <text evidence="1">Involved in the control of Yop release.</text>
</comment>
<comment type="subunit">
    <text evidence="1">Interacts with the translocator YopD and with residues 242-293 of YopN.</text>
</comment>
<comment type="similarity">
    <text evidence="2">Belongs to the TyeA family.</text>
</comment>
<geneLocation type="plasmid">
    <name>pCD1</name>
</geneLocation>
<name>TYEA_YERPE</name>
<accession>P69968</accession>
<accession>P16161</accession>
<accession>Q663K2</accession>
<protein>
    <recommendedName>
        <fullName>Protein TyeA</fullName>
    </recommendedName>
</protein>
<gene>
    <name type="primary">tyeA</name>
    <name type="ordered locus">YPCD1.38c</name>
    <name type="ordered locus">y5040</name>
    <name type="ordered locus">y0043</name>
    <name type="ordered locus">YP_pCD45</name>
</gene>
<sequence length="92" mass="10753">MAYDLSEFMGDIVALVDKRWAGIHDIEHLANAFSLPTPEIKVRFYQDLKRMFRLFPLGVFSDEEQRQNLLQMCQNAIDMAIESEEEELSELD</sequence>
<feature type="chain" id="PRO_0000065703" description="Protein TyeA">
    <location>
        <begin position="1"/>
        <end position="92"/>
    </location>
</feature>
<feature type="helix" evidence="3">
    <location>
        <begin position="5"/>
        <end position="17"/>
    </location>
</feature>
<feature type="helix" evidence="3">
    <location>
        <begin position="23"/>
        <end position="31"/>
    </location>
</feature>
<feature type="turn" evidence="3">
    <location>
        <begin position="38"/>
        <end position="40"/>
    </location>
</feature>
<feature type="helix" evidence="3">
    <location>
        <begin position="43"/>
        <end position="48"/>
    </location>
</feature>
<feature type="helix" evidence="3">
    <location>
        <begin position="52"/>
        <end position="54"/>
    </location>
</feature>
<feature type="helix" evidence="3">
    <location>
        <begin position="57"/>
        <end position="59"/>
    </location>
</feature>
<feature type="helix" evidence="3">
    <location>
        <begin position="63"/>
        <end position="89"/>
    </location>
</feature>
<reference key="1">
    <citation type="journal article" date="1998" name="Infect. Immun.">
        <title>DNA sequencing and analysis of the low-Ca2+-response plasmid pCD1 of Yersinia pestis KIM5.</title>
        <authorList>
            <person name="Perry R.D."/>
            <person name="Straley S.C."/>
            <person name="Fetherston J.D."/>
            <person name="Rose D.J."/>
            <person name="Gregor J."/>
            <person name="Blattner F.R."/>
        </authorList>
    </citation>
    <scope>NUCLEOTIDE SEQUENCE [GENOMIC DNA]</scope>
    <source>
        <strain>KIM5 / Biovar Mediaevalis</strain>
    </source>
</reference>
<reference key="2">
    <citation type="journal article" date="1998" name="J. Bacteriol.">
        <title>Structural organization of virulence-associated plasmids of Yersinia pestis.</title>
        <authorList>
            <person name="Hu P."/>
            <person name="Elliott J."/>
            <person name="McCready P."/>
            <person name="Skowronski E."/>
            <person name="Garnes J."/>
            <person name="Kobayashi A."/>
            <person name="Brubaker R.R."/>
            <person name="Garcia E."/>
        </authorList>
    </citation>
    <scope>NUCLEOTIDE SEQUENCE [GENOMIC DNA]</scope>
    <source>
        <strain>KIM5 / Biovar Mediaevalis</strain>
    </source>
</reference>
<reference key="3">
    <citation type="journal article" date="2001" name="Nature">
        <title>Genome sequence of Yersinia pestis, the causative agent of plague.</title>
        <authorList>
            <person name="Parkhill J."/>
            <person name="Wren B.W."/>
            <person name="Thomson N.R."/>
            <person name="Titball R.W."/>
            <person name="Holden M.T.G."/>
            <person name="Prentice M.B."/>
            <person name="Sebaihia M."/>
            <person name="James K.D."/>
            <person name="Churcher C.M."/>
            <person name="Mungall K.L."/>
            <person name="Baker S."/>
            <person name="Basham D."/>
            <person name="Bentley S.D."/>
            <person name="Brooks K."/>
            <person name="Cerdeno-Tarraga A.-M."/>
            <person name="Chillingworth T."/>
            <person name="Cronin A."/>
            <person name="Davies R.M."/>
            <person name="Davis P."/>
            <person name="Dougan G."/>
            <person name="Feltwell T."/>
            <person name="Hamlin N."/>
            <person name="Holroyd S."/>
            <person name="Jagels K."/>
            <person name="Karlyshev A.V."/>
            <person name="Leather S."/>
            <person name="Moule S."/>
            <person name="Oyston P.C.F."/>
            <person name="Quail M.A."/>
            <person name="Rutherford K.M."/>
            <person name="Simmonds M."/>
            <person name="Skelton J."/>
            <person name="Stevens K."/>
            <person name="Whitehead S."/>
            <person name="Barrell B.G."/>
        </authorList>
    </citation>
    <scope>NUCLEOTIDE SEQUENCE [LARGE SCALE GENOMIC DNA]</scope>
    <source>
        <strain>CO-92 / Biovar Orientalis</strain>
    </source>
</reference>
<reference key="4">
    <citation type="journal article" date="2004" name="DNA Res.">
        <title>Complete genome sequence of Yersinia pestis strain 91001, an isolate avirulent to humans.</title>
        <authorList>
            <person name="Song Y."/>
            <person name="Tong Z."/>
            <person name="Wang J."/>
            <person name="Wang L."/>
            <person name="Guo Z."/>
            <person name="Han Y."/>
            <person name="Zhang J."/>
            <person name="Pei D."/>
            <person name="Zhou D."/>
            <person name="Qin H."/>
            <person name="Pang X."/>
            <person name="Han Y."/>
            <person name="Zhai J."/>
            <person name="Li M."/>
            <person name="Cui B."/>
            <person name="Qi Z."/>
            <person name="Jin L."/>
            <person name="Dai R."/>
            <person name="Chen F."/>
            <person name="Li S."/>
            <person name="Ye C."/>
            <person name="Du Z."/>
            <person name="Lin W."/>
            <person name="Wang J."/>
            <person name="Yu J."/>
            <person name="Yang H."/>
            <person name="Wang J."/>
            <person name="Huang P."/>
            <person name="Yang R."/>
        </authorList>
    </citation>
    <scope>NUCLEOTIDE SEQUENCE [LARGE SCALE GENOMIC DNA]</scope>
    <source>
        <strain>91001 / Biovar Mediaevalis</strain>
    </source>
</reference>
<evidence type="ECO:0000250" key="1"/>
<evidence type="ECO:0000305" key="2"/>
<evidence type="ECO:0007829" key="3">
    <source>
        <dbReference type="PDB" id="1XL3"/>
    </source>
</evidence>
<keyword id="KW-0002">3D-structure</keyword>
<keyword id="KW-0614">Plasmid</keyword>
<keyword id="KW-1185">Reference proteome</keyword>